<comment type="function">
    <text evidence="1">May help in the organization of the PsaL subunit.</text>
</comment>
<comment type="subcellular location">
    <subcellularLocation>
        <location evidence="1">Plastid</location>
        <location evidence="1">Chloroplast thylakoid membrane</location>
        <topology evidence="1">Single-pass membrane protein</topology>
    </subcellularLocation>
</comment>
<comment type="similarity">
    <text evidence="1">Belongs to the PsaI family.</text>
</comment>
<reference key="1">
    <citation type="journal article" date="2005" name="BMC Biol.">
        <title>The complete chloroplast DNA sequences of the charophycean green algae Staurastrum and Zygnema reveal that the chloroplast genome underwent extensive changes during the evolution of the Zygnematales.</title>
        <authorList>
            <person name="Turmel M."/>
            <person name="Otis C."/>
            <person name="Lemieux C."/>
        </authorList>
    </citation>
    <scope>NUCLEOTIDE SEQUENCE [LARGE SCALE GENOMIC DNA]</scope>
</reference>
<keyword id="KW-0150">Chloroplast</keyword>
<keyword id="KW-0472">Membrane</keyword>
<keyword id="KW-0602">Photosynthesis</keyword>
<keyword id="KW-0603">Photosystem I</keyword>
<keyword id="KW-0934">Plastid</keyword>
<keyword id="KW-0793">Thylakoid</keyword>
<keyword id="KW-0812">Transmembrane</keyword>
<keyword id="KW-1133">Transmembrane helix</keyword>
<dbReference type="EMBL" id="AY958085">
    <property type="protein sequence ID" value="AAX45718.1"/>
    <property type="molecule type" value="Genomic_DNA"/>
</dbReference>
<dbReference type="RefSeq" id="YP_636398.1">
    <property type="nucleotide sequence ID" value="NC_008116.1"/>
</dbReference>
<dbReference type="SMR" id="Q32RX8"/>
<dbReference type="GeneID" id="4108677"/>
<dbReference type="GO" id="GO:0009535">
    <property type="term" value="C:chloroplast thylakoid membrane"/>
    <property type="evidence" value="ECO:0007669"/>
    <property type="project" value="UniProtKB-SubCell"/>
</dbReference>
<dbReference type="GO" id="GO:0009522">
    <property type="term" value="C:photosystem I"/>
    <property type="evidence" value="ECO:0007669"/>
    <property type="project" value="UniProtKB-KW"/>
</dbReference>
<dbReference type="GO" id="GO:0015979">
    <property type="term" value="P:photosynthesis"/>
    <property type="evidence" value="ECO:0007669"/>
    <property type="project" value="UniProtKB-UniRule"/>
</dbReference>
<dbReference type="HAMAP" id="MF_00431">
    <property type="entry name" value="PSI_PsaI"/>
    <property type="match status" value="1"/>
</dbReference>
<dbReference type="InterPro" id="IPR001302">
    <property type="entry name" value="PSI_PsaI"/>
</dbReference>
<dbReference type="InterPro" id="IPR036357">
    <property type="entry name" value="PSI_PsaI_sf"/>
</dbReference>
<dbReference type="NCBIfam" id="NF008830">
    <property type="entry name" value="PRK11877.1"/>
    <property type="match status" value="1"/>
</dbReference>
<dbReference type="NCBIfam" id="TIGR03052">
    <property type="entry name" value="PS_I_psaI"/>
    <property type="match status" value="1"/>
</dbReference>
<dbReference type="PANTHER" id="PTHR35775">
    <property type="match status" value="1"/>
</dbReference>
<dbReference type="PANTHER" id="PTHR35775:SF2">
    <property type="entry name" value="PHOTOSYSTEM I REACTION CENTER SUBUNIT VIII"/>
    <property type="match status" value="1"/>
</dbReference>
<dbReference type="Pfam" id="PF00796">
    <property type="entry name" value="PSI_8"/>
    <property type="match status" value="1"/>
</dbReference>
<dbReference type="SUPFAM" id="SSF81540">
    <property type="entry name" value="Subunit VIII of photosystem I reaction centre, PsaI"/>
    <property type="match status" value="1"/>
</dbReference>
<proteinExistence type="inferred from homology"/>
<gene>
    <name evidence="1" type="primary">psaI</name>
</gene>
<organism>
    <name type="scientific">Staurastrum punctulatum</name>
    <name type="common">Green alga</name>
    <name type="synonym">Cosmoastrum punctulatum</name>
    <dbReference type="NCBI Taxonomy" id="102822"/>
    <lineage>
        <taxon>Eukaryota</taxon>
        <taxon>Viridiplantae</taxon>
        <taxon>Streptophyta</taxon>
        <taxon>Zygnematophyceae</taxon>
        <taxon>Zygnematophycidae</taxon>
        <taxon>Desmidiales</taxon>
        <taxon>Desmidiaceae</taxon>
        <taxon>Staurastrum</taxon>
    </lineage>
</organism>
<sequence length="36" mass="3928">MSASYLPSILVPLVGLVFPAVTMASLFLYIEQDEIV</sequence>
<evidence type="ECO:0000255" key="1">
    <source>
        <dbReference type="HAMAP-Rule" id="MF_00431"/>
    </source>
</evidence>
<accession>Q32RX8</accession>
<name>PSAI_STAPU</name>
<protein>
    <recommendedName>
        <fullName evidence="1">Photosystem I reaction center subunit VIII</fullName>
        <shortName evidence="1">PSI-I</shortName>
    </recommendedName>
</protein>
<geneLocation type="chloroplast"/>
<feature type="chain" id="PRO_0000276041" description="Photosystem I reaction center subunit VIII">
    <location>
        <begin position="1"/>
        <end position="36"/>
    </location>
</feature>
<feature type="transmembrane region" description="Helical" evidence="1">
    <location>
        <begin position="9"/>
        <end position="29"/>
    </location>
</feature>